<gene>
    <name evidence="1" type="primary">HA</name>
</gene>
<proteinExistence type="inferred from homology"/>
<feature type="signal peptide" evidence="1">
    <location>
        <begin position="1"/>
        <end position="18"/>
    </location>
</feature>
<feature type="chain" id="PRO_0000440517" description="Hemagglutinin" evidence="1">
    <location>
        <begin position="19"/>
        <end position="563"/>
    </location>
</feature>
<feature type="chain" id="PRO_0000440518" description="Hemagglutinin HA1 chain" evidence="1">
    <location>
        <begin position="19"/>
        <end position="341"/>
    </location>
</feature>
<feature type="chain" id="PRO_0000039046" description="Hemagglutinin HA2 chain" evidence="1">
    <location>
        <begin position="343"/>
        <end position="563"/>
    </location>
</feature>
<feature type="topological domain" description="Extracellular" evidence="1">
    <location>
        <begin position="19"/>
        <end position="526"/>
    </location>
</feature>
<feature type="transmembrane region" description="Helical" evidence="1">
    <location>
        <begin position="527"/>
        <end position="547"/>
    </location>
</feature>
<feature type="topological domain" description="Cytoplasmic" evidence="1">
    <location>
        <begin position="548"/>
        <end position="563"/>
    </location>
</feature>
<feature type="site" description="Cleavage; by host" evidence="1">
    <location>
        <begin position="342"/>
        <end position="343"/>
    </location>
</feature>
<feature type="lipid moiety-binding region" description="S-palmitoyl cysteine; by host" evidence="1">
    <location>
        <position position="559"/>
    </location>
</feature>
<feature type="lipid moiety-binding region" description="S-palmitoyl cysteine; by host" evidence="1">
    <location>
        <position position="562"/>
    </location>
</feature>
<feature type="glycosylation site" description="N-linked (GlcNAc...) asparagine; by host" evidence="1">
    <location>
        <position position="30"/>
    </location>
</feature>
<feature type="glycosylation site" description="N-linked (GlcNAc...) asparagine; by host" evidence="1">
    <location>
        <position position="46"/>
    </location>
</feature>
<feature type="glycosylation site" description="N-linked (GlcNAc...) asparagine; by host" evidence="1">
    <location>
        <position position="249"/>
    </location>
</feature>
<feature type="glycosylation site" description="N-linked (GlcNAc...) asparagine; by host" evidence="1">
    <location>
        <position position="424"/>
    </location>
</feature>
<feature type="glycosylation site" description="N-linked (GlcNAc...) asparagine; by host" evidence="1">
    <location>
        <position position="496"/>
    </location>
</feature>
<feature type="disulfide bond" description="Interchain (between HA1 and HA2 chains)" evidence="1">
    <location>
        <begin position="22"/>
        <end position="479"/>
    </location>
</feature>
<feature type="disulfide bond" evidence="1">
    <location>
        <begin position="60"/>
        <end position="286"/>
    </location>
</feature>
<feature type="disulfide bond" evidence="1">
    <location>
        <begin position="72"/>
        <end position="84"/>
    </location>
</feature>
<feature type="disulfide bond" evidence="1">
    <location>
        <begin position="105"/>
        <end position="147"/>
    </location>
</feature>
<feature type="disulfide bond" evidence="1">
    <location>
        <begin position="290"/>
        <end position="314"/>
    </location>
</feature>
<feature type="disulfide bond" evidence="1">
    <location>
        <begin position="486"/>
        <end position="490"/>
    </location>
</feature>
<dbReference type="EMBL" id="M17736">
    <property type="protein sequence ID" value="AAA43154.1"/>
    <property type="molecule type" value="Genomic_RNA"/>
</dbReference>
<dbReference type="SMR" id="P09344"/>
<dbReference type="GlyCosmos" id="P09344">
    <property type="glycosylation" value="5 sites, No reported glycans"/>
</dbReference>
<dbReference type="GO" id="GO:0020002">
    <property type="term" value="C:host cell plasma membrane"/>
    <property type="evidence" value="ECO:0007669"/>
    <property type="project" value="UniProtKB-SubCell"/>
</dbReference>
<dbReference type="GO" id="GO:0016020">
    <property type="term" value="C:membrane"/>
    <property type="evidence" value="ECO:0007669"/>
    <property type="project" value="UniProtKB-UniRule"/>
</dbReference>
<dbReference type="GO" id="GO:0019031">
    <property type="term" value="C:viral envelope"/>
    <property type="evidence" value="ECO:0007669"/>
    <property type="project" value="UniProtKB-UniRule"/>
</dbReference>
<dbReference type="GO" id="GO:0055036">
    <property type="term" value="C:virion membrane"/>
    <property type="evidence" value="ECO:0007669"/>
    <property type="project" value="UniProtKB-SubCell"/>
</dbReference>
<dbReference type="GO" id="GO:0046789">
    <property type="term" value="F:host cell surface receptor binding"/>
    <property type="evidence" value="ECO:0007669"/>
    <property type="project" value="UniProtKB-UniRule"/>
</dbReference>
<dbReference type="GO" id="GO:0075512">
    <property type="term" value="P:clathrin-dependent endocytosis of virus by host cell"/>
    <property type="evidence" value="ECO:0007669"/>
    <property type="project" value="UniProtKB-UniRule"/>
</dbReference>
<dbReference type="GO" id="GO:0039654">
    <property type="term" value="P:fusion of virus membrane with host endosome membrane"/>
    <property type="evidence" value="ECO:0007669"/>
    <property type="project" value="UniProtKB-UniRule"/>
</dbReference>
<dbReference type="GO" id="GO:0019064">
    <property type="term" value="P:fusion of virus membrane with host plasma membrane"/>
    <property type="evidence" value="ECO:0007669"/>
    <property type="project" value="InterPro"/>
</dbReference>
<dbReference type="GO" id="GO:0046761">
    <property type="term" value="P:viral budding from plasma membrane"/>
    <property type="evidence" value="ECO:0007669"/>
    <property type="project" value="UniProtKB-UniRule"/>
</dbReference>
<dbReference type="GO" id="GO:0019062">
    <property type="term" value="P:virion attachment to host cell"/>
    <property type="evidence" value="ECO:0007669"/>
    <property type="project" value="UniProtKB-KW"/>
</dbReference>
<dbReference type="Gene3D" id="3.90.20.10">
    <property type="match status" value="1"/>
</dbReference>
<dbReference type="Gene3D" id="3.90.209.20">
    <property type="match status" value="1"/>
</dbReference>
<dbReference type="HAMAP" id="MF_04072">
    <property type="entry name" value="INFV_HEMA"/>
    <property type="match status" value="1"/>
</dbReference>
<dbReference type="InterPro" id="IPR008980">
    <property type="entry name" value="Capsid_hemagglutn"/>
</dbReference>
<dbReference type="InterPro" id="IPR013828">
    <property type="entry name" value="Hemagglutn_HA1_a/b_dom_sf"/>
</dbReference>
<dbReference type="InterPro" id="IPR000149">
    <property type="entry name" value="Hemagglutn_influenz_A"/>
</dbReference>
<dbReference type="InterPro" id="IPR001364">
    <property type="entry name" value="Hemagglutn_influenz_A/B"/>
</dbReference>
<dbReference type="Pfam" id="PF00509">
    <property type="entry name" value="Hemagglutinin"/>
    <property type="match status" value="1"/>
</dbReference>
<dbReference type="PRINTS" id="PR00330">
    <property type="entry name" value="HEMAGGLUTN1"/>
</dbReference>
<dbReference type="PRINTS" id="PR00329">
    <property type="entry name" value="HEMAGGLUTN12"/>
</dbReference>
<dbReference type="SUPFAM" id="SSF58064">
    <property type="entry name" value="Influenza hemagglutinin (stalk)"/>
    <property type="match status" value="1"/>
</dbReference>
<dbReference type="SUPFAM" id="SSF49818">
    <property type="entry name" value="Viral protein domain"/>
    <property type="match status" value="1"/>
</dbReference>
<reference key="1">
    <citation type="journal article" date="1987" name="Virology">
        <title>Molecular analysis of the hemagglutinin genes of Australian H7N7 influenza viruses: role of passerine birds in maintenance or transmission?</title>
        <authorList>
            <person name="Nestorowicz A."/>
            <person name="Kawaoka Y."/>
            <person name="Bean W.J."/>
            <person name="Webster R.G."/>
        </authorList>
    </citation>
    <scope>NUCLEOTIDE SEQUENCE [GENOMIC RNA]</scope>
</reference>
<organismHost>
    <name type="scientific">Aves</name>
    <dbReference type="NCBI Taxonomy" id="8782"/>
</organismHost>
<organismHost>
    <name type="scientific">Equus caballus</name>
    <name type="common">Horse</name>
    <dbReference type="NCBI Taxonomy" id="9796"/>
</organismHost>
<organismHost>
    <name type="scientific">Homo sapiens</name>
    <name type="common">Human</name>
    <dbReference type="NCBI Taxonomy" id="9606"/>
</organismHost>
<organismHost>
    <name type="scientific">Phocidae</name>
    <name type="common">true seals</name>
    <dbReference type="NCBI Taxonomy" id="9709"/>
</organismHost>
<protein>
    <recommendedName>
        <fullName evidence="1">Hemagglutinin</fullName>
    </recommendedName>
    <component>
        <recommendedName>
            <fullName evidence="1">Hemagglutinin HA1 chain</fullName>
        </recommendedName>
    </component>
    <component>
        <recommendedName>
            <fullName evidence="1">Hemagglutinin HA2 chain</fullName>
        </recommendedName>
    </component>
</protein>
<sequence>MNTQILILTLVAAIHTNADKICLGHHAVSNGTKVNTLTERGVEVVNATETVERRTIPRICTKGKKAIDLGQCGLLGIITGPPQCDQFLEFTADLIIERREGNDVCYPGKFVNEEALRQILRESGGINKETTGFTYSGIRTNGVTSACRRSGSSFYAEMKWLLSNTDNAAFPQMTKSYKNTRNEPALIVWGIHHSGSATEQTKLYGSGNKLITVGSSNYQQSFVPSPGARPQVNGQSGRIDFHWLILNPNDTVTFSFNGAFVAPDRVSFFKGKSMGIQSEVPVDTNCEGECYHNGGTITSNLPFQNVNSRAVGKCPRYVKQKSLLLATGMKNVPEIPKKREKRGLFGAIAGFIENGWEGLVDGWYGFRHQNAQGEGTAADYKSTQSAIDQITGKLNRLIEKTNQQFELIDNEFTEVEKQIGNVINWTRDSITEVWSYNADLLVAMENQHTIDLTDSEMNKLYERVRRQLRENAEEDCTGCFEIFHKCDDDCMASIRNNTYDHSTYREEAMQNRVKIDPVKLSSGYKDVILWFSLGASCFLLLAIAMGLVFMCVKNGNMRCTICI</sequence>
<keyword id="KW-1167">Clathrin- and caveolin-independent endocytosis of virus by host</keyword>
<keyword id="KW-1165">Clathrin-mediated endocytosis of virus by host</keyword>
<keyword id="KW-1015">Disulfide bond</keyword>
<keyword id="KW-1170">Fusion of virus membrane with host endosomal membrane</keyword>
<keyword id="KW-1168">Fusion of virus membrane with host membrane</keyword>
<keyword id="KW-0325">Glycoprotein</keyword>
<keyword id="KW-0348">Hemagglutinin</keyword>
<keyword id="KW-1032">Host cell membrane</keyword>
<keyword id="KW-1043">Host membrane</keyword>
<keyword id="KW-0945">Host-virus interaction</keyword>
<keyword id="KW-0449">Lipoprotein</keyword>
<keyword id="KW-0472">Membrane</keyword>
<keyword id="KW-0564">Palmitate</keyword>
<keyword id="KW-0732">Signal</keyword>
<keyword id="KW-0812">Transmembrane</keyword>
<keyword id="KW-1133">Transmembrane helix</keyword>
<keyword id="KW-1161">Viral attachment to host cell</keyword>
<keyword id="KW-0261">Viral envelope protein</keyword>
<keyword id="KW-1162">Viral penetration into host cytoplasm</keyword>
<keyword id="KW-0946">Virion</keyword>
<keyword id="KW-1164">Virus endocytosis by host</keyword>
<keyword id="KW-1160">Virus entry into host cell</keyword>
<name>HEMA_I85A6</name>
<comment type="function">
    <text>Binds to sialic acid-containing receptors on the cell surface, bringing about the attachment of the virus particle to the cell. This attachment induces virion internalization of about two third of the virus particles through clathrin-dependent endocytosis and about one third through a clathrin- and caveolin-independent pathway. Plays a major role in the determination of host range restriction and virulence. Class I viral fusion protein. Responsible for penetration of the virus into the cell cytoplasm by mediating the fusion of the membrane of the endocytosed virus particle with the endosomal membrane. Low pH in endosomes induces an irreversible conformational change in HA2, releasing the fusion hydrophobic peptide. Several trimers are required to form a competent fusion pore.</text>
</comment>
<comment type="function">
    <text evidence="1">Binds to sialic acid-containing receptors on the cell surface, bringing about the attachment of the virus particle to the cell. This attachment induces virion internalization either through clathrin-dependent endocytosis or through clathrin- and caveolin-independent pathway. Plays a major role in the determination of host range restriction and virulence. Class I viral fusion protein. Responsible for penetration of the virus into the cell cytoplasm by mediating the fusion of the membrane of the endocytosed virus particle with the endosomal membrane. Low pH in endosomes induces an irreversible conformational change in HA2, releasing the fusion hydrophobic peptide. Several trimers are required to form a competent fusion pore.</text>
</comment>
<comment type="subunit">
    <text evidence="1">Homotrimer of disulfide-linked HA1-HA2.</text>
</comment>
<comment type="subcellular location">
    <subcellularLocation>
        <location evidence="1">Virion membrane</location>
        <topology evidence="1">Single-pass type I membrane protein</topology>
    </subcellularLocation>
    <subcellularLocation>
        <location evidence="1">Host apical cell membrane</location>
        <topology evidence="1">Single-pass type I membrane protein</topology>
    </subcellularLocation>
    <text evidence="1">Targeted to the apical plasma membrane in epithelial polarized cells through a signal present in the transmembrane domain. Associated with glycosphingolipid- and cholesterol-enriched detergent-resistant lipid rafts.</text>
</comment>
<comment type="PTM">
    <text evidence="1">Palmitoylated.</text>
</comment>
<comment type="PTM">
    <text evidence="1">In natural infection, inactive HA is matured into HA1 and HA2 outside the cell by one or more trypsin-like, arginine-specific endoprotease secreted by the bronchial epithelial cells. One identified protease that may be involved in this process is secreted in lungs by club cells.</text>
</comment>
<comment type="miscellaneous">
    <text>The extent of infection into host organism is determined by HA. Influenza viruses bud from the apical surface of polarized epithelial cells (e.g. bronchial epithelial cells) into lumen of lungs and are therefore usually pneumotropic. The reason is that HA is cleaved by tryptase clara which is restricted to lungs. However, HAs of H5 and H7 pantropic avian viruses subtypes can be cleaved by furin and subtilisin-type enzymes, allowing the virus to grow in other organs than lungs.</text>
</comment>
<comment type="miscellaneous">
    <text evidence="2">The influenza A genome consist of 8 RNA segments. Genetic variation of hemagglutinin and/or neuraminidase genes results in the emergence of new influenza strains. The mechanism of variation can be the result of point mutations or the result of genetic reassortment between segments of two different strains.</text>
</comment>
<comment type="similarity">
    <text evidence="1">Belongs to the influenza viruses hemagglutinin family.</text>
</comment>
<evidence type="ECO:0000255" key="1">
    <source>
        <dbReference type="HAMAP-Rule" id="MF_04072"/>
    </source>
</evidence>
<evidence type="ECO:0000305" key="2"/>
<organism>
    <name type="scientific">Influenza A virus (strain A/Starling/Victoria/5156/1985 H7N7)</name>
    <dbReference type="NCBI Taxonomy" id="402525"/>
    <lineage>
        <taxon>Viruses</taxon>
        <taxon>Riboviria</taxon>
        <taxon>Orthornavirae</taxon>
        <taxon>Negarnaviricota</taxon>
        <taxon>Polyploviricotina</taxon>
        <taxon>Insthoviricetes</taxon>
        <taxon>Articulavirales</taxon>
        <taxon>Orthomyxoviridae</taxon>
        <taxon>Alphainfluenzavirus</taxon>
        <taxon>Alphainfluenzavirus influenzae</taxon>
        <taxon>Influenza A virus</taxon>
    </lineage>
</organism>
<accession>P09344</accession>